<feature type="signal peptide" evidence="1">
    <location>
        <begin position="1"/>
        <end position="16"/>
    </location>
</feature>
<feature type="chain" id="PRO_1000140651" description="UPF0194 membrane protein YbhG">
    <location>
        <begin position="17"/>
        <end position="332"/>
    </location>
</feature>
<feature type="coiled-coil region" evidence="1">
    <location>
        <begin position="108"/>
        <end position="209"/>
    </location>
</feature>
<reference key="1">
    <citation type="journal article" date="2009" name="PLoS Genet.">
        <title>Organised genome dynamics in the Escherichia coli species results in highly diverse adaptive paths.</title>
        <authorList>
            <person name="Touchon M."/>
            <person name="Hoede C."/>
            <person name="Tenaillon O."/>
            <person name="Barbe V."/>
            <person name="Baeriswyl S."/>
            <person name="Bidet P."/>
            <person name="Bingen E."/>
            <person name="Bonacorsi S."/>
            <person name="Bouchier C."/>
            <person name="Bouvet O."/>
            <person name="Calteau A."/>
            <person name="Chiapello H."/>
            <person name="Clermont O."/>
            <person name="Cruveiller S."/>
            <person name="Danchin A."/>
            <person name="Diard M."/>
            <person name="Dossat C."/>
            <person name="Karoui M.E."/>
            <person name="Frapy E."/>
            <person name="Garry L."/>
            <person name="Ghigo J.M."/>
            <person name="Gilles A.M."/>
            <person name="Johnson J."/>
            <person name="Le Bouguenec C."/>
            <person name="Lescat M."/>
            <person name="Mangenot S."/>
            <person name="Martinez-Jehanne V."/>
            <person name="Matic I."/>
            <person name="Nassif X."/>
            <person name="Oztas S."/>
            <person name="Petit M.A."/>
            <person name="Pichon C."/>
            <person name="Rouy Z."/>
            <person name="Ruf C.S."/>
            <person name="Schneider D."/>
            <person name="Tourret J."/>
            <person name="Vacherie B."/>
            <person name="Vallenet D."/>
            <person name="Medigue C."/>
            <person name="Rocha E.P.C."/>
            <person name="Denamur E."/>
        </authorList>
    </citation>
    <scope>NUCLEOTIDE SEQUENCE [LARGE SCALE GENOMIC DNA]</scope>
    <source>
        <strain>IAI1</strain>
    </source>
</reference>
<evidence type="ECO:0000255" key="1">
    <source>
        <dbReference type="HAMAP-Rule" id="MF_01304"/>
    </source>
</evidence>
<keyword id="KW-0175">Coiled coil</keyword>
<keyword id="KW-0574">Periplasm</keyword>
<keyword id="KW-0732">Signal</keyword>
<name>YBHG_ECO8A</name>
<accession>B7M768</accession>
<sequence>MMKKPVVIGLAVVVLAAVVAGGYWWYQSRQDNGLTLYGNVDIRTVNLSFRVGGRVESLAVDEGDAIKAGQVLGELDHKPYEIALMQAKAGVSVAQAQYDLMLAGYRDEEIAQAAAAVKQAQAAYDYAQNFYNRQQGLWKSRTISANDLENARSSRDQAQATLKSAQDKLRQYRSGNREQDIAQAKASLEQAQAQLAQAELNLQDSTLIAPSDGTLLTRAVEPGTVLNEGGTVFTVSLTRPVWVRAYVDERNLDQAQPGRKVLLYTDGRPDKPYHGQIGFVSPTAEFTPKTVETPDLRTDLVYRLRIVVTDADDALRQGMPVTVQFGNEAGHE</sequence>
<proteinExistence type="inferred from homology"/>
<gene>
    <name evidence="1" type="primary">ybhG</name>
    <name type="ordered locus">ECIAI1_0831</name>
</gene>
<organism>
    <name type="scientific">Escherichia coli O8 (strain IAI1)</name>
    <dbReference type="NCBI Taxonomy" id="585034"/>
    <lineage>
        <taxon>Bacteria</taxon>
        <taxon>Pseudomonadati</taxon>
        <taxon>Pseudomonadota</taxon>
        <taxon>Gammaproteobacteria</taxon>
        <taxon>Enterobacterales</taxon>
        <taxon>Enterobacteriaceae</taxon>
        <taxon>Escherichia</taxon>
    </lineage>
</organism>
<comment type="subcellular location">
    <subcellularLocation>
        <location evidence="1">Periplasm</location>
    </subcellularLocation>
</comment>
<comment type="similarity">
    <text evidence="1">Belongs to the UPF0194 family.</text>
</comment>
<dbReference type="EMBL" id="CU928160">
    <property type="protein sequence ID" value="CAQ97696.1"/>
    <property type="molecule type" value="Genomic_DNA"/>
</dbReference>
<dbReference type="SMR" id="B7M768"/>
<dbReference type="KEGG" id="ecr:ECIAI1_0831"/>
<dbReference type="HOGENOM" id="CLU_018816_6_3_6"/>
<dbReference type="GO" id="GO:0042597">
    <property type="term" value="C:periplasmic space"/>
    <property type="evidence" value="ECO:0007669"/>
    <property type="project" value="UniProtKB-SubCell"/>
</dbReference>
<dbReference type="FunFam" id="1.10.287.470:FF:000004">
    <property type="entry name" value="UPF0194 membrane protein YbhG"/>
    <property type="match status" value="1"/>
</dbReference>
<dbReference type="FunFam" id="2.40.30.170:FF:000005">
    <property type="entry name" value="UPF0194 membrane protein YbhG"/>
    <property type="match status" value="1"/>
</dbReference>
<dbReference type="FunFam" id="2.40.50.100:FF:000025">
    <property type="entry name" value="UPF0194 membrane protein YbhG"/>
    <property type="match status" value="1"/>
</dbReference>
<dbReference type="Gene3D" id="2.40.30.170">
    <property type="match status" value="1"/>
</dbReference>
<dbReference type="Gene3D" id="2.40.50.100">
    <property type="match status" value="2"/>
</dbReference>
<dbReference type="Gene3D" id="1.10.287.470">
    <property type="entry name" value="Helix hairpin bin"/>
    <property type="match status" value="2"/>
</dbReference>
<dbReference type="HAMAP" id="MF_01304">
    <property type="entry name" value="UPF0194"/>
    <property type="match status" value="1"/>
</dbReference>
<dbReference type="InterPro" id="IPR032317">
    <property type="entry name" value="CusB_D23"/>
</dbReference>
<dbReference type="InterPro" id="IPR022936">
    <property type="entry name" value="UPF0194_membrane_YbhG"/>
</dbReference>
<dbReference type="InterPro" id="IPR050465">
    <property type="entry name" value="UPF0194_transport"/>
</dbReference>
<dbReference type="NCBIfam" id="NF002939">
    <property type="entry name" value="PRK03598.1"/>
    <property type="match status" value="1"/>
</dbReference>
<dbReference type="PANTHER" id="PTHR32347">
    <property type="entry name" value="EFFLUX SYSTEM COMPONENT YKNX-RELATED"/>
    <property type="match status" value="1"/>
</dbReference>
<dbReference type="PANTHER" id="PTHR32347:SF29">
    <property type="entry name" value="UPF0194 MEMBRANE PROTEIN YBHG"/>
    <property type="match status" value="1"/>
</dbReference>
<dbReference type="Pfam" id="PF16576">
    <property type="entry name" value="HlyD_D23"/>
    <property type="match status" value="1"/>
</dbReference>
<dbReference type="SUPFAM" id="SSF111369">
    <property type="entry name" value="HlyD-like secretion proteins"/>
    <property type="match status" value="2"/>
</dbReference>
<dbReference type="SUPFAM" id="SSF56954">
    <property type="entry name" value="Outer membrane efflux proteins (OEP)"/>
    <property type="match status" value="1"/>
</dbReference>
<protein>
    <recommendedName>
        <fullName evidence="1">UPF0194 membrane protein YbhG</fullName>
    </recommendedName>
</protein>